<accession>B9E0C7</accession>
<comment type="function">
    <text evidence="1">Nucleotidase that shows phosphatase activity on nucleoside 5'-monophosphates.</text>
</comment>
<comment type="catalytic activity">
    <reaction evidence="1">
        <text>a ribonucleoside 5'-phosphate + H2O = a ribonucleoside + phosphate</text>
        <dbReference type="Rhea" id="RHEA:12484"/>
        <dbReference type="ChEBI" id="CHEBI:15377"/>
        <dbReference type="ChEBI" id="CHEBI:18254"/>
        <dbReference type="ChEBI" id="CHEBI:43474"/>
        <dbReference type="ChEBI" id="CHEBI:58043"/>
        <dbReference type="EC" id="3.1.3.5"/>
    </reaction>
</comment>
<comment type="cofactor">
    <cofactor evidence="1">
        <name>a divalent metal cation</name>
        <dbReference type="ChEBI" id="CHEBI:60240"/>
    </cofactor>
    <text evidence="1">Binds 1 divalent metal cation per subunit.</text>
</comment>
<comment type="subcellular location">
    <subcellularLocation>
        <location evidence="1">Cytoplasm</location>
    </subcellularLocation>
</comment>
<comment type="similarity">
    <text evidence="1">Belongs to the SurE nucleotidase family.</text>
</comment>
<gene>
    <name evidence="1" type="primary">surE</name>
    <name type="ordered locus">CKR_0901</name>
</gene>
<keyword id="KW-0963">Cytoplasm</keyword>
<keyword id="KW-0378">Hydrolase</keyword>
<keyword id="KW-0479">Metal-binding</keyword>
<keyword id="KW-0547">Nucleotide-binding</keyword>
<protein>
    <recommendedName>
        <fullName evidence="1">5'-nucleotidase SurE</fullName>
        <ecNumber evidence="1">3.1.3.5</ecNumber>
    </recommendedName>
    <alternativeName>
        <fullName evidence="1">Nucleoside 5'-monophosphate phosphohydrolase</fullName>
    </alternativeName>
</protein>
<feature type="chain" id="PRO_1000196589" description="5'-nucleotidase SurE">
    <location>
        <begin position="1"/>
        <end position="245"/>
    </location>
</feature>
<feature type="binding site" evidence="1">
    <location>
        <position position="8"/>
    </location>
    <ligand>
        <name>a divalent metal cation</name>
        <dbReference type="ChEBI" id="CHEBI:60240"/>
    </ligand>
</feature>
<feature type="binding site" evidence="1">
    <location>
        <position position="9"/>
    </location>
    <ligand>
        <name>a divalent metal cation</name>
        <dbReference type="ChEBI" id="CHEBI:60240"/>
    </ligand>
</feature>
<feature type="binding site" evidence="1">
    <location>
        <position position="39"/>
    </location>
    <ligand>
        <name>a divalent metal cation</name>
        <dbReference type="ChEBI" id="CHEBI:60240"/>
    </ligand>
</feature>
<feature type="binding site" evidence="1">
    <location>
        <position position="97"/>
    </location>
    <ligand>
        <name>a divalent metal cation</name>
        <dbReference type="ChEBI" id="CHEBI:60240"/>
    </ligand>
</feature>
<name>SURE_CLOK1</name>
<reference key="1">
    <citation type="submission" date="2005-09" db="EMBL/GenBank/DDBJ databases">
        <title>Complete genome sequence of Clostridium kluyveri and comparative genomics of Clostridia species.</title>
        <authorList>
            <person name="Inui M."/>
            <person name="Nonaka H."/>
            <person name="Shinoda Y."/>
            <person name="Ikenaga Y."/>
            <person name="Abe M."/>
            <person name="Naito K."/>
            <person name="Vertes A.A."/>
            <person name="Yukawa H."/>
        </authorList>
    </citation>
    <scope>NUCLEOTIDE SEQUENCE [LARGE SCALE GENOMIC DNA]</scope>
    <source>
        <strain>NBRC 12016</strain>
    </source>
</reference>
<sequence>MRLLLTNDDGIMAEGIQVLAKHFEKDNEVIIAAPDVQRSGSGHCITTVPGELIIQEVKLEGINSKAYSITGTPADCARLGVRKLGNNQIDMVISGINNGFNLGIDSLYSGTVSAAIEAAICETPSIAVSLDTKGGNYDYNIAAEYALEVFSIYKDKYKNKDENVVLSLNVPCLPREKIKGLKVCRVGFKYHLQEIYDKGEKTEELSYNYTDIYYVKRGYAALSPLHYDLTNYKILGDINNLFTEK</sequence>
<evidence type="ECO:0000255" key="1">
    <source>
        <dbReference type="HAMAP-Rule" id="MF_00060"/>
    </source>
</evidence>
<organism>
    <name type="scientific">Clostridium kluyveri (strain NBRC 12016)</name>
    <dbReference type="NCBI Taxonomy" id="583346"/>
    <lineage>
        <taxon>Bacteria</taxon>
        <taxon>Bacillati</taxon>
        <taxon>Bacillota</taxon>
        <taxon>Clostridia</taxon>
        <taxon>Eubacteriales</taxon>
        <taxon>Clostridiaceae</taxon>
        <taxon>Clostridium</taxon>
    </lineage>
</organism>
<dbReference type="EC" id="3.1.3.5" evidence="1"/>
<dbReference type="EMBL" id="AP009049">
    <property type="protein sequence ID" value="BAH05952.1"/>
    <property type="molecule type" value="Genomic_DNA"/>
</dbReference>
<dbReference type="RefSeq" id="WP_012101369.1">
    <property type="nucleotide sequence ID" value="NC_011837.1"/>
</dbReference>
<dbReference type="SMR" id="B9E0C7"/>
<dbReference type="KEGG" id="ckr:CKR_0901"/>
<dbReference type="HOGENOM" id="CLU_045192_1_3_9"/>
<dbReference type="Proteomes" id="UP000007969">
    <property type="component" value="Chromosome"/>
</dbReference>
<dbReference type="GO" id="GO:0005737">
    <property type="term" value="C:cytoplasm"/>
    <property type="evidence" value="ECO:0007669"/>
    <property type="project" value="UniProtKB-SubCell"/>
</dbReference>
<dbReference type="GO" id="GO:0008254">
    <property type="term" value="F:3'-nucleotidase activity"/>
    <property type="evidence" value="ECO:0007669"/>
    <property type="project" value="TreeGrafter"/>
</dbReference>
<dbReference type="GO" id="GO:0008253">
    <property type="term" value="F:5'-nucleotidase activity"/>
    <property type="evidence" value="ECO:0007669"/>
    <property type="project" value="UniProtKB-UniRule"/>
</dbReference>
<dbReference type="GO" id="GO:0004309">
    <property type="term" value="F:exopolyphosphatase activity"/>
    <property type="evidence" value="ECO:0007669"/>
    <property type="project" value="TreeGrafter"/>
</dbReference>
<dbReference type="GO" id="GO:0046872">
    <property type="term" value="F:metal ion binding"/>
    <property type="evidence" value="ECO:0007669"/>
    <property type="project" value="UniProtKB-UniRule"/>
</dbReference>
<dbReference type="GO" id="GO:0000166">
    <property type="term" value="F:nucleotide binding"/>
    <property type="evidence" value="ECO:0007669"/>
    <property type="project" value="UniProtKB-KW"/>
</dbReference>
<dbReference type="Gene3D" id="3.40.1210.10">
    <property type="entry name" value="Survival protein SurE-like phosphatase/nucleotidase"/>
    <property type="match status" value="1"/>
</dbReference>
<dbReference type="HAMAP" id="MF_00060">
    <property type="entry name" value="SurE"/>
    <property type="match status" value="1"/>
</dbReference>
<dbReference type="InterPro" id="IPR030048">
    <property type="entry name" value="SurE"/>
</dbReference>
<dbReference type="InterPro" id="IPR002828">
    <property type="entry name" value="SurE-like_Pase/nucleotidase"/>
</dbReference>
<dbReference type="InterPro" id="IPR036523">
    <property type="entry name" value="SurE-like_sf"/>
</dbReference>
<dbReference type="NCBIfam" id="NF010543">
    <property type="entry name" value="PRK13933.1"/>
    <property type="match status" value="1"/>
</dbReference>
<dbReference type="NCBIfam" id="TIGR00087">
    <property type="entry name" value="surE"/>
    <property type="match status" value="1"/>
</dbReference>
<dbReference type="PANTHER" id="PTHR30457">
    <property type="entry name" value="5'-NUCLEOTIDASE SURE"/>
    <property type="match status" value="1"/>
</dbReference>
<dbReference type="PANTHER" id="PTHR30457:SF12">
    <property type="entry name" value="5'_3'-NUCLEOTIDASE SURE"/>
    <property type="match status" value="1"/>
</dbReference>
<dbReference type="Pfam" id="PF01975">
    <property type="entry name" value="SurE"/>
    <property type="match status" value="1"/>
</dbReference>
<dbReference type="SUPFAM" id="SSF64167">
    <property type="entry name" value="SurE-like"/>
    <property type="match status" value="1"/>
</dbReference>
<proteinExistence type="inferred from homology"/>